<sequence>MNIQKFLLKKIHRALLAITNESFFHLIQVQQSTKRKFGNYQINGLIAISKKLNIPIEEFAKKFIQFINLNDVAHTIKIEKPGFINIFLNTKWISNQINNIFSASHLGITPATPKTIVIDYSGPNVAKEMHVGHLRSTVIGDSIARVLSFLGHNVIRANHIGDWGTQFGMLIAYIEKNAQTRFLLNKTIQLSTLEHFYREAKKKYDIDPDFAELSRNYVLKLQKGDKHYRQIWKYLVDISILNNQDIYVRLNINLKKSDIIGESFYNDMLPDIVSDLKNKGLAVTSNGATVVFLENYHNKLGTPFGVIIQKKDGAYLYSTTDIACIKYRCKVLHADRIIYYIDSRQKQHLIQAWEIADKAGYIEKSVLLEHHMCGMLLGKDGKPFKTRAGNALKLKTLLDEALERARCLILSKNPNLKYTEINKLAHIISIGAIKYSELSKNRITDYIFDWNNMLNFEGNTAPYVQYACTRIFAIFKRSKQPNFQLKKNDIQLETEEEILLAICLLQFEEMIVAVSNQGAPHILCSYLYKLSVLFSSFYENCPIIKAHNTHIKYSRLKLALITMRTLKTGLNLLGIKTVRYM</sequence>
<gene>
    <name evidence="1" type="primary">argS</name>
    <name type="ordered locus">BPEN_468</name>
</gene>
<protein>
    <recommendedName>
        <fullName evidence="1">Arginine--tRNA ligase</fullName>
        <ecNumber evidence="1">6.1.1.19</ecNumber>
    </recommendedName>
    <alternativeName>
        <fullName evidence="1">Arginyl-tRNA synthetase</fullName>
        <shortName evidence="1">ArgRS</shortName>
    </alternativeName>
</protein>
<name>SYR_BLOPB</name>
<proteinExistence type="inferred from homology"/>
<feature type="chain" id="PRO_0000241991" description="Arginine--tRNA ligase">
    <location>
        <begin position="1"/>
        <end position="581"/>
    </location>
</feature>
<feature type="short sequence motif" description="'HIGH' region">
    <location>
        <begin position="123"/>
        <end position="133"/>
    </location>
</feature>
<organism>
    <name type="scientific">Blochmanniella pennsylvanica (strain BPEN)</name>
    <dbReference type="NCBI Taxonomy" id="291272"/>
    <lineage>
        <taxon>Bacteria</taxon>
        <taxon>Pseudomonadati</taxon>
        <taxon>Pseudomonadota</taxon>
        <taxon>Gammaproteobacteria</taxon>
        <taxon>Enterobacterales</taxon>
        <taxon>Enterobacteriaceae</taxon>
        <taxon>ant endosymbionts</taxon>
        <taxon>Candidatus Blochmanniella</taxon>
    </lineage>
</organism>
<comment type="catalytic activity">
    <reaction evidence="1">
        <text>tRNA(Arg) + L-arginine + ATP = L-arginyl-tRNA(Arg) + AMP + diphosphate</text>
        <dbReference type="Rhea" id="RHEA:20301"/>
        <dbReference type="Rhea" id="RHEA-COMP:9658"/>
        <dbReference type="Rhea" id="RHEA-COMP:9673"/>
        <dbReference type="ChEBI" id="CHEBI:30616"/>
        <dbReference type="ChEBI" id="CHEBI:32682"/>
        <dbReference type="ChEBI" id="CHEBI:33019"/>
        <dbReference type="ChEBI" id="CHEBI:78442"/>
        <dbReference type="ChEBI" id="CHEBI:78513"/>
        <dbReference type="ChEBI" id="CHEBI:456215"/>
        <dbReference type="EC" id="6.1.1.19"/>
    </reaction>
</comment>
<comment type="subunit">
    <text evidence="1">Monomer.</text>
</comment>
<comment type="subcellular location">
    <subcellularLocation>
        <location evidence="1">Cytoplasm</location>
    </subcellularLocation>
</comment>
<comment type="similarity">
    <text evidence="1">Belongs to the class-I aminoacyl-tRNA synthetase family.</text>
</comment>
<accession>Q492L0</accession>
<dbReference type="EC" id="6.1.1.19" evidence="1"/>
<dbReference type="EMBL" id="CP000016">
    <property type="protein sequence ID" value="AAZ41087.1"/>
    <property type="molecule type" value="Genomic_DNA"/>
</dbReference>
<dbReference type="RefSeq" id="WP_011282997.1">
    <property type="nucleotide sequence ID" value="NC_007292.1"/>
</dbReference>
<dbReference type="SMR" id="Q492L0"/>
<dbReference type="STRING" id="291272.BPEN_468"/>
<dbReference type="KEGG" id="bpn:BPEN_468"/>
<dbReference type="eggNOG" id="COG0018">
    <property type="taxonomic scope" value="Bacteria"/>
</dbReference>
<dbReference type="HOGENOM" id="CLU_006406_5_1_6"/>
<dbReference type="OrthoDB" id="9803211at2"/>
<dbReference type="Proteomes" id="UP000007794">
    <property type="component" value="Chromosome"/>
</dbReference>
<dbReference type="GO" id="GO:0005737">
    <property type="term" value="C:cytoplasm"/>
    <property type="evidence" value="ECO:0007669"/>
    <property type="project" value="UniProtKB-SubCell"/>
</dbReference>
<dbReference type="GO" id="GO:0004814">
    <property type="term" value="F:arginine-tRNA ligase activity"/>
    <property type="evidence" value="ECO:0007669"/>
    <property type="project" value="UniProtKB-UniRule"/>
</dbReference>
<dbReference type="GO" id="GO:0005524">
    <property type="term" value="F:ATP binding"/>
    <property type="evidence" value="ECO:0007669"/>
    <property type="project" value="UniProtKB-UniRule"/>
</dbReference>
<dbReference type="GO" id="GO:0006420">
    <property type="term" value="P:arginyl-tRNA aminoacylation"/>
    <property type="evidence" value="ECO:0007669"/>
    <property type="project" value="UniProtKB-UniRule"/>
</dbReference>
<dbReference type="CDD" id="cd00671">
    <property type="entry name" value="ArgRS_core"/>
    <property type="match status" value="1"/>
</dbReference>
<dbReference type="FunFam" id="3.40.50.620:FF:000030">
    <property type="entry name" value="Arginine--tRNA ligase"/>
    <property type="match status" value="1"/>
</dbReference>
<dbReference type="Gene3D" id="3.30.1360.70">
    <property type="entry name" value="Arginyl tRNA synthetase N-terminal domain"/>
    <property type="match status" value="1"/>
</dbReference>
<dbReference type="Gene3D" id="3.40.50.620">
    <property type="entry name" value="HUPs"/>
    <property type="match status" value="1"/>
</dbReference>
<dbReference type="Gene3D" id="1.10.730.10">
    <property type="entry name" value="Isoleucyl-tRNA Synthetase, Domain 1"/>
    <property type="match status" value="1"/>
</dbReference>
<dbReference type="HAMAP" id="MF_00123">
    <property type="entry name" value="Arg_tRNA_synth"/>
    <property type="match status" value="1"/>
</dbReference>
<dbReference type="InterPro" id="IPR001412">
    <property type="entry name" value="aa-tRNA-synth_I_CS"/>
</dbReference>
<dbReference type="InterPro" id="IPR001278">
    <property type="entry name" value="Arg-tRNA-ligase"/>
</dbReference>
<dbReference type="InterPro" id="IPR005148">
    <property type="entry name" value="Arg-tRNA-synth_N"/>
</dbReference>
<dbReference type="InterPro" id="IPR036695">
    <property type="entry name" value="Arg-tRNA-synth_N_sf"/>
</dbReference>
<dbReference type="InterPro" id="IPR035684">
    <property type="entry name" value="ArgRS_core"/>
</dbReference>
<dbReference type="InterPro" id="IPR008909">
    <property type="entry name" value="DALR_anticod-bd"/>
</dbReference>
<dbReference type="InterPro" id="IPR014729">
    <property type="entry name" value="Rossmann-like_a/b/a_fold"/>
</dbReference>
<dbReference type="InterPro" id="IPR009080">
    <property type="entry name" value="tRNAsynth_Ia_anticodon-bd"/>
</dbReference>
<dbReference type="NCBIfam" id="TIGR00456">
    <property type="entry name" value="argS"/>
    <property type="match status" value="1"/>
</dbReference>
<dbReference type="PANTHER" id="PTHR11956:SF5">
    <property type="entry name" value="ARGININE--TRNA LIGASE, CYTOPLASMIC"/>
    <property type="match status" value="1"/>
</dbReference>
<dbReference type="PANTHER" id="PTHR11956">
    <property type="entry name" value="ARGINYL-TRNA SYNTHETASE"/>
    <property type="match status" value="1"/>
</dbReference>
<dbReference type="Pfam" id="PF03485">
    <property type="entry name" value="Arg_tRNA_synt_N"/>
    <property type="match status" value="1"/>
</dbReference>
<dbReference type="Pfam" id="PF05746">
    <property type="entry name" value="DALR_1"/>
    <property type="match status" value="1"/>
</dbReference>
<dbReference type="Pfam" id="PF00750">
    <property type="entry name" value="tRNA-synt_1d"/>
    <property type="match status" value="1"/>
</dbReference>
<dbReference type="PRINTS" id="PR01038">
    <property type="entry name" value="TRNASYNTHARG"/>
</dbReference>
<dbReference type="SMART" id="SM01016">
    <property type="entry name" value="Arg_tRNA_synt_N"/>
    <property type="match status" value="1"/>
</dbReference>
<dbReference type="SMART" id="SM00836">
    <property type="entry name" value="DALR_1"/>
    <property type="match status" value="1"/>
</dbReference>
<dbReference type="SUPFAM" id="SSF47323">
    <property type="entry name" value="Anticodon-binding domain of a subclass of class I aminoacyl-tRNA synthetases"/>
    <property type="match status" value="1"/>
</dbReference>
<dbReference type="SUPFAM" id="SSF55190">
    <property type="entry name" value="Arginyl-tRNA synthetase (ArgRS), N-terminal 'additional' domain"/>
    <property type="match status" value="1"/>
</dbReference>
<dbReference type="SUPFAM" id="SSF52374">
    <property type="entry name" value="Nucleotidylyl transferase"/>
    <property type="match status" value="1"/>
</dbReference>
<dbReference type="PROSITE" id="PS00178">
    <property type="entry name" value="AA_TRNA_LIGASE_I"/>
    <property type="match status" value="1"/>
</dbReference>
<keyword id="KW-0030">Aminoacyl-tRNA synthetase</keyword>
<keyword id="KW-0067">ATP-binding</keyword>
<keyword id="KW-0963">Cytoplasm</keyword>
<keyword id="KW-0436">Ligase</keyword>
<keyword id="KW-0547">Nucleotide-binding</keyword>
<keyword id="KW-0648">Protein biosynthesis</keyword>
<keyword id="KW-1185">Reference proteome</keyword>
<evidence type="ECO:0000255" key="1">
    <source>
        <dbReference type="HAMAP-Rule" id="MF_00123"/>
    </source>
</evidence>
<reference key="1">
    <citation type="journal article" date="2005" name="Genome Res.">
        <title>Genome sequence of Blochmannia pennsylvanicus indicates parallel evolutionary trends among bacterial mutualists of insects.</title>
        <authorList>
            <person name="Degnan P.H."/>
            <person name="Lazarus A.B."/>
            <person name="Wernegreen J.J."/>
        </authorList>
    </citation>
    <scope>NUCLEOTIDE SEQUENCE [LARGE SCALE GENOMIC DNA]</scope>
    <source>
        <strain>BPEN</strain>
    </source>
</reference>